<organism>
    <name type="scientific">Meyerozyma guilliermondii (strain ATCC 6260 / CBS 566 / DSM 6381 / JCM 1539 / NBRC 10279 / NRRL Y-324)</name>
    <name type="common">Yeast</name>
    <name type="synonym">Candida guilliermondii</name>
    <dbReference type="NCBI Taxonomy" id="294746"/>
    <lineage>
        <taxon>Eukaryota</taxon>
        <taxon>Fungi</taxon>
        <taxon>Dikarya</taxon>
        <taxon>Ascomycota</taxon>
        <taxon>Saccharomycotina</taxon>
        <taxon>Pichiomycetes</taxon>
        <taxon>Debaryomycetaceae</taxon>
        <taxon>Meyerozyma</taxon>
    </lineage>
</organism>
<evidence type="ECO:0000250" key="1"/>
<evidence type="ECO:0000255" key="2"/>
<evidence type="ECO:0000256" key="3">
    <source>
        <dbReference type="SAM" id="MobiDB-lite"/>
    </source>
</evidence>
<evidence type="ECO:0000305" key="4"/>
<keyword id="KW-0342">GTP-binding</keyword>
<keyword id="KW-0378">Hydrolase</keyword>
<keyword id="KW-0479">Metal-binding</keyword>
<keyword id="KW-0547">Nucleotide-binding</keyword>
<keyword id="KW-1185">Reference proteome</keyword>
<keyword id="KW-0686">Riboflavin biosynthesis</keyword>
<keyword id="KW-0862">Zinc</keyword>
<protein>
    <recommendedName>
        <fullName>GTP cyclohydrolase-2</fullName>
        <ecNumber>3.5.4.25</ecNumber>
    </recommendedName>
    <alternativeName>
        <fullName>GTP cyclohydrolase II</fullName>
    </alternativeName>
</protein>
<accession>P50139</accession>
<accession>A5DL76</accession>
<gene>
    <name type="primary">RIB1</name>
    <name type="ORF">PGUG_04027</name>
</gene>
<comment type="function">
    <text evidence="1">Catalyzes the conversion of GTP to 2,5-diamino-6-ribosylamino-4(3H)-pyrimidinone 5'-phosphate (DARP), formate and pyrophosphate.</text>
</comment>
<comment type="catalytic activity">
    <reaction>
        <text>GTP + 4 H2O = 2,5-diamino-6-hydroxy-4-(5-phosphoribosylamino)-pyrimidine + formate + 2 phosphate + 3 H(+)</text>
        <dbReference type="Rhea" id="RHEA:23704"/>
        <dbReference type="ChEBI" id="CHEBI:15377"/>
        <dbReference type="ChEBI" id="CHEBI:15378"/>
        <dbReference type="ChEBI" id="CHEBI:15740"/>
        <dbReference type="ChEBI" id="CHEBI:37565"/>
        <dbReference type="ChEBI" id="CHEBI:43474"/>
        <dbReference type="ChEBI" id="CHEBI:58614"/>
        <dbReference type="EC" id="3.5.4.25"/>
    </reaction>
</comment>
<comment type="cofactor">
    <cofactor evidence="1">
        <name>Zn(2+)</name>
        <dbReference type="ChEBI" id="CHEBI:29105"/>
    </cofactor>
    <text evidence="1">Binds 1 zinc ion per subunit.</text>
</comment>
<comment type="pathway">
    <text>Cofactor biosynthesis; riboflavin biosynthesis; 5-amino-6-(D-ribitylamino)uracil from GTP: step 1/4.</text>
</comment>
<comment type="similarity">
    <text evidence="4">Belongs to the GTP cyclohydrolase II family.</text>
</comment>
<comment type="sequence caution" evidence="4">
    <conflict type="frameshift">
        <sequence resource="EMBL-CDS" id="CAA88916"/>
    </conflict>
</comment>
<sequence length="332" mass="37147">MASKDIVHPQPERRHGSETHEFTMPLLSPTLTPSHIPSQTPQIPPEVPAEVRDRLPLPETLPVVKCMARARIPTTQGPEIFLHLYENNVDNKEHLAIVFGEDVRSKTLYQKRPNETQQDRMTRGAYVGRLFPGRTEADYDSESNLRLNFDENGQLIRDPSTTCSGEPILARIHSECYTGETAWSARCDCGEQFDEAGRLMGEAGHGCIVYLRQEGRGIGLGEKLKAYNLQDLGADTVQANLMLRHPADARSFSLATAILLDLGLNEIKLLTNNPDKIAAVEGRNREVKVVERVPMVPLAWRSENGIKSKEIEGYLSAKIERMGHLLEKPLKI</sequence>
<proteinExistence type="inferred from homology"/>
<dbReference type="EC" id="3.5.4.25"/>
<dbReference type="EMBL" id="Z49093">
    <property type="protein sequence ID" value="CAA88916.1"/>
    <property type="status" value="ALT_FRAME"/>
    <property type="molecule type" value="Genomic_DNA"/>
</dbReference>
<dbReference type="EMBL" id="CH408159">
    <property type="protein sequence ID" value="EDK39929.1"/>
    <property type="molecule type" value="Genomic_DNA"/>
</dbReference>
<dbReference type="PIR" id="S57373">
    <property type="entry name" value="S57373"/>
</dbReference>
<dbReference type="RefSeq" id="XP_001483298.1">
    <property type="nucleotide sequence ID" value="XM_001483248.1"/>
</dbReference>
<dbReference type="SMR" id="P50139"/>
<dbReference type="FunCoup" id="P50139">
    <property type="interactions" value="138"/>
</dbReference>
<dbReference type="STRING" id="294746.P50139"/>
<dbReference type="GeneID" id="5125322"/>
<dbReference type="KEGG" id="pgu:PGUG_04027"/>
<dbReference type="VEuPathDB" id="FungiDB:PGUG_04027"/>
<dbReference type="eggNOG" id="KOG1284">
    <property type="taxonomic scope" value="Eukaryota"/>
</dbReference>
<dbReference type="HOGENOM" id="CLU_020273_2_4_1"/>
<dbReference type="InParanoid" id="P50139"/>
<dbReference type="OMA" id="RLPNVEC"/>
<dbReference type="OrthoDB" id="5569761at2759"/>
<dbReference type="UniPathway" id="UPA00275">
    <property type="reaction ID" value="UER00400"/>
</dbReference>
<dbReference type="Proteomes" id="UP000001997">
    <property type="component" value="Unassembled WGS sequence"/>
</dbReference>
<dbReference type="GO" id="GO:0005525">
    <property type="term" value="F:GTP binding"/>
    <property type="evidence" value="ECO:0007669"/>
    <property type="project" value="UniProtKB-KW"/>
</dbReference>
<dbReference type="GO" id="GO:0003935">
    <property type="term" value="F:GTP cyclohydrolase II activity"/>
    <property type="evidence" value="ECO:0007669"/>
    <property type="project" value="UniProtKB-EC"/>
</dbReference>
<dbReference type="GO" id="GO:0046872">
    <property type="term" value="F:metal ion binding"/>
    <property type="evidence" value="ECO:0007669"/>
    <property type="project" value="UniProtKB-KW"/>
</dbReference>
<dbReference type="GO" id="GO:0009231">
    <property type="term" value="P:riboflavin biosynthetic process"/>
    <property type="evidence" value="ECO:0007669"/>
    <property type="project" value="UniProtKB-UniPathway"/>
</dbReference>
<dbReference type="CDD" id="cd00641">
    <property type="entry name" value="GTP_cyclohydro2"/>
    <property type="match status" value="1"/>
</dbReference>
<dbReference type="Gene3D" id="3.40.50.10990">
    <property type="entry name" value="GTP cyclohydrolase II"/>
    <property type="match status" value="1"/>
</dbReference>
<dbReference type="InterPro" id="IPR032677">
    <property type="entry name" value="GTP_cyclohydro_II"/>
</dbReference>
<dbReference type="InterPro" id="IPR000926">
    <property type="entry name" value="RibA"/>
</dbReference>
<dbReference type="InterPro" id="IPR036144">
    <property type="entry name" value="RibA-like_sf"/>
</dbReference>
<dbReference type="NCBIfam" id="NF001591">
    <property type="entry name" value="PRK00393.1"/>
    <property type="match status" value="1"/>
</dbReference>
<dbReference type="NCBIfam" id="TIGR00505">
    <property type="entry name" value="ribA"/>
    <property type="match status" value="1"/>
</dbReference>
<dbReference type="PANTHER" id="PTHR21327">
    <property type="entry name" value="GTP CYCLOHYDROLASE II-RELATED"/>
    <property type="match status" value="1"/>
</dbReference>
<dbReference type="PANTHER" id="PTHR21327:SF29">
    <property type="entry name" value="GTP CYCLOHYDROLASE-2"/>
    <property type="match status" value="1"/>
</dbReference>
<dbReference type="Pfam" id="PF00925">
    <property type="entry name" value="GTP_cyclohydro2"/>
    <property type="match status" value="1"/>
</dbReference>
<dbReference type="SUPFAM" id="SSF142695">
    <property type="entry name" value="RibA-like"/>
    <property type="match status" value="1"/>
</dbReference>
<feature type="chain" id="PRO_0000151785" description="GTP cyclohydrolase-2">
    <location>
        <begin position="1"/>
        <end position="332"/>
    </location>
</feature>
<feature type="region of interest" description="Disordered" evidence="3">
    <location>
        <begin position="1"/>
        <end position="20"/>
    </location>
</feature>
<feature type="region of interest" description="Disordered" evidence="3">
    <location>
        <begin position="25"/>
        <end position="46"/>
    </location>
</feature>
<feature type="compositionally biased region" description="Polar residues" evidence="3">
    <location>
        <begin position="29"/>
        <end position="41"/>
    </location>
</feature>
<feature type="active site" description="Proton acceptor" evidence="2">
    <location>
        <position position="248"/>
    </location>
</feature>
<feature type="active site" description="Nucleophile" evidence="1">
    <location>
        <position position="250"/>
    </location>
</feature>
<feature type="binding site" evidence="1">
    <location>
        <begin position="171"/>
        <end position="175"/>
    </location>
    <ligand>
        <name>GTP</name>
        <dbReference type="ChEBI" id="CHEBI:37565"/>
    </ligand>
</feature>
<feature type="binding site" evidence="1">
    <location>
        <position position="176"/>
    </location>
    <ligand>
        <name>Zn(2+)</name>
        <dbReference type="ChEBI" id="CHEBI:29105"/>
        <note>catalytic</note>
    </ligand>
</feature>
<feature type="binding site" evidence="1">
    <location>
        <position position="187"/>
    </location>
    <ligand>
        <name>Zn(2+)</name>
        <dbReference type="ChEBI" id="CHEBI:29105"/>
        <note>catalytic</note>
    </ligand>
</feature>
<feature type="binding site" evidence="1">
    <location>
        <position position="189"/>
    </location>
    <ligand>
        <name>Zn(2+)</name>
        <dbReference type="ChEBI" id="CHEBI:29105"/>
        <note>catalytic</note>
    </ligand>
</feature>
<feature type="binding site" evidence="1">
    <location>
        <position position="192"/>
    </location>
    <ligand>
        <name>GTP</name>
        <dbReference type="ChEBI" id="CHEBI:37565"/>
    </ligand>
</feature>
<feature type="binding site" evidence="1">
    <location>
        <begin position="214"/>
        <end position="216"/>
    </location>
    <ligand>
        <name>GTP</name>
        <dbReference type="ChEBI" id="CHEBI:37565"/>
    </ligand>
</feature>
<feature type="binding site" evidence="1">
    <location>
        <position position="236"/>
    </location>
    <ligand>
        <name>GTP</name>
        <dbReference type="ChEBI" id="CHEBI:37565"/>
    </ligand>
</feature>
<feature type="binding site" evidence="1">
    <location>
        <position position="271"/>
    </location>
    <ligand>
        <name>GTP</name>
        <dbReference type="ChEBI" id="CHEBI:37565"/>
    </ligand>
</feature>
<feature type="binding site" evidence="1">
    <location>
        <position position="276"/>
    </location>
    <ligand>
        <name>GTP</name>
        <dbReference type="ChEBI" id="CHEBI:37565"/>
    </ligand>
</feature>
<feature type="sequence conflict" description="In Ref. 1; CAA88916." evidence="4" ref="1">
    <original>L</original>
    <variation>V</variation>
    <location>
        <position position="147"/>
    </location>
</feature>
<feature type="sequence conflict" description="In Ref. 1; CAA88916." evidence="4" ref="1">
    <original>E</original>
    <variation>V</variation>
    <location>
        <position position="151"/>
    </location>
</feature>
<feature type="sequence conflict" description="In Ref. 1; CAA88916." evidence="4" ref="1">
    <original>A</original>
    <variation>S</variation>
    <location>
        <position position="170"/>
    </location>
</feature>
<feature type="sequence conflict" description="In Ref. 1; CAA88916." evidence="4" ref="1">
    <original>A</original>
    <variation>P</variation>
    <location>
        <position position="182"/>
    </location>
</feature>
<feature type="sequence conflict" description="In Ref. 1; CAA88916." evidence="4" ref="1">
    <original>S</original>
    <variation>T</variation>
    <location>
        <position position="316"/>
    </location>
</feature>
<name>RIB1_PICGU</name>
<reference key="1">
    <citation type="journal article" date="1995" name="Yeast">
        <title>Molecular cloning of the GTP-cyclohydrolase structural gene RIB1 of Pichia guilliermondii involved in riboflavin biosynthesis.</title>
        <authorList>
            <person name="Liauta-Teglivets O.Y."/>
            <person name="Hasslacher M."/>
            <person name="Boretsky Y.R."/>
            <person name="Kohlwein S.D."/>
            <person name="Shavlovskii G.M."/>
        </authorList>
    </citation>
    <scope>NUCLEOTIDE SEQUENCE [GENOMIC DNA]</scope>
</reference>
<reference key="2">
    <citation type="journal article" date="2009" name="Nature">
        <title>Evolution of pathogenicity and sexual reproduction in eight Candida genomes.</title>
        <authorList>
            <person name="Butler G."/>
            <person name="Rasmussen M.D."/>
            <person name="Lin M.F."/>
            <person name="Santos M.A.S."/>
            <person name="Sakthikumar S."/>
            <person name="Munro C.A."/>
            <person name="Rheinbay E."/>
            <person name="Grabherr M."/>
            <person name="Forche A."/>
            <person name="Reedy J.L."/>
            <person name="Agrafioti I."/>
            <person name="Arnaud M.B."/>
            <person name="Bates S."/>
            <person name="Brown A.J.P."/>
            <person name="Brunke S."/>
            <person name="Costanzo M.C."/>
            <person name="Fitzpatrick D.A."/>
            <person name="de Groot P.W.J."/>
            <person name="Harris D."/>
            <person name="Hoyer L.L."/>
            <person name="Hube B."/>
            <person name="Klis F.M."/>
            <person name="Kodira C."/>
            <person name="Lennard N."/>
            <person name="Logue M.E."/>
            <person name="Martin R."/>
            <person name="Neiman A.M."/>
            <person name="Nikolaou E."/>
            <person name="Quail M.A."/>
            <person name="Quinn J."/>
            <person name="Santos M.C."/>
            <person name="Schmitzberger F.F."/>
            <person name="Sherlock G."/>
            <person name="Shah P."/>
            <person name="Silverstein K.A.T."/>
            <person name="Skrzypek M.S."/>
            <person name="Soll D."/>
            <person name="Staggs R."/>
            <person name="Stansfield I."/>
            <person name="Stumpf M.P.H."/>
            <person name="Sudbery P.E."/>
            <person name="Srikantha T."/>
            <person name="Zeng Q."/>
            <person name="Berman J."/>
            <person name="Berriman M."/>
            <person name="Heitman J."/>
            <person name="Gow N.A.R."/>
            <person name="Lorenz M.C."/>
            <person name="Birren B.W."/>
            <person name="Kellis M."/>
            <person name="Cuomo C.A."/>
        </authorList>
    </citation>
    <scope>NUCLEOTIDE SEQUENCE [LARGE SCALE GENOMIC DNA]</scope>
    <source>
        <strain>ATCC 6260 / CBS 566 / DSM 6381 / JCM 1539 / NBRC 10279 / NRRL Y-324</strain>
    </source>
</reference>